<keyword id="KW-1185">Reference proteome</keyword>
<keyword id="KW-0346">Stress response</keyword>
<accession>P02516</accession>
<accession>Q9VSX5</accession>
<proteinExistence type="evidence at protein level"/>
<gene>
    <name type="primary">Hsp23</name>
    <name type="ORF">CG4463</name>
</gene>
<reference key="1">
    <citation type="journal article" date="1983" name="J. Mol. Biol.">
        <title>Nucleotide sequence analysis of the Drosophila small heat shock gene cluster at locus 67B.</title>
        <authorList>
            <person name="Southgate R."/>
            <person name="Ayme A."/>
            <person name="Voellmy R."/>
        </authorList>
    </citation>
    <scope>NUCLEOTIDE SEQUENCE [GENOMIC DNA]</scope>
</reference>
<reference key="2">
    <citation type="journal article" date="1982" name="Proc. Natl. Acad. Sci. U.S.A.">
        <title>Four small Drosophila heat shock proteins are related to each other and to mammalian alpha-crystallin.</title>
        <authorList>
            <person name="Ingolia T.D."/>
            <person name="Craig E.A."/>
        </authorList>
    </citation>
    <scope>NUCLEOTIDE SEQUENCE [GENOMIC DNA]</scope>
</reference>
<reference key="3">
    <citation type="journal article" date="2000" name="Science">
        <title>The genome sequence of Drosophila melanogaster.</title>
        <authorList>
            <person name="Adams M.D."/>
            <person name="Celniker S.E."/>
            <person name="Holt R.A."/>
            <person name="Evans C.A."/>
            <person name="Gocayne J.D."/>
            <person name="Amanatides P.G."/>
            <person name="Scherer S.E."/>
            <person name="Li P.W."/>
            <person name="Hoskins R.A."/>
            <person name="Galle R.F."/>
            <person name="George R.A."/>
            <person name="Lewis S.E."/>
            <person name="Richards S."/>
            <person name="Ashburner M."/>
            <person name="Henderson S.N."/>
            <person name="Sutton G.G."/>
            <person name="Wortman J.R."/>
            <person name="Yandell M.D."/>
            <person name="Zhang Q."/>
            <person name="Chen L.X."/>
            <person name="Brandon R.C."/>
            <person name="Rogers Y.-H.C."/>
            <person name="Blazej R.G."/>
            <person name="Champe M."/>
            <person name="Pfeiffer B.D."/>
            <person name="Wan K.H."/>
            <person name="Doyle C."/>
            <person name="Baxter E.G."/>
            <person name="Helt G."/>
            <person name="Nelson C.R."/>
            <person name="Miklos G.L.G."/>
            <person name="Abril J.F."/>
            <person name="Agbayani A."/>
            <person name="An H.-J."/>
            <person name="Andrews-Pfannkoch C."/>
            <person name="Baldwin D."/>
            <person name="Ballew R.M."/>
            <person name="Basu A."/>
            <person name="Baxendale J."/>
            <person name="Bayraktaroglu L."/>
            <person name="Beasley E.M."/>
            <person name="Beeson K.Y."/>
            <person name="Benos P.V."/>
            <person name="Berman B.P."/>
            <person name="Bhandari D."/>
            <person name="Bolshakov S."/>
            <person name="Borkova D."/>
            <person name="Botchan M.R."/>
            <person name="Bouck J."/>
            <person name="Brokstein P."/>
            <person name="Brottier P."/>
            <person name="Burtis K.C."/>
            <person name="Busam D.A."/>
            <person name="Butler H."/>
            <person name="Cadieu E."/>
            <person name="Center A."/>
            <person name="Chandra I."/>
            <person name="Cherry J.M."/>
            <person name="Cawley S."/>
            <person name="Dahlke C."/>
            <person name="Davenport L.B."/>
            <person name="Davies P."/>
            <person name="de Pablos B."/>
            <person name="Delcher A."/>
            <person name="Deng Z."/>
            <person name="Mays A.D."/>
            <person name="Dew I."/>
            <person name="Dietz S.M."/>
            <person name="Dodson K."/>
            <person name="Doup L.E."/>
            <person name="Downes M."/>
            <person name="Dugan-Rocha S."/>
            <person name="Dunkov B.C."/>
            <person name="Dunn P."/>
            <person name="Durbin K.J."/>
            <person name="Evangelista C.C."/>
            <person name="Ferraz C."/>
            <person name="Ferriera S."/>
            <person name="Fleischmann W."/>
            <person name="Fosler C."/>
            <person name="Gabrielian A.E."/>
            <person name="Garg N.S."/>
            <person name="Gelbart W.M."/>
            <person name="Glasser K."/>
            <person name="Glodek A."/>
            <person name="Gong F."/>
            <person name="Gorrell J.H."/>
            <person name="Gu Z."/>
            <person name="Guan P."/>
            <person name="Harris M."/>
            <person name="Harris N.L."/>
            <person name="Harvey D.A."/>
            <person name="Heiman T.J."/>
            <person name="Hernandez J.R."/>
            <person name="Houck J."/>
            <person name="Hostin D."/>
            <person name="Houston K.A."/>
            <person name="Howland T.J."/>
            <person name="Wei M.-H."/>
            <person name="Ibegwam C."/>
            <person name="Jalali M."/>
            <person name="Kalush F."/>
            <person name="Karpen G.H."/>
            <person name="Ke Z."/>
            <person name="Kennison J.A."/>
            <person name="Ketchum K.A."/>
            <person name="Kimmel B.E."/>
            <person name="Kodira C.D."/>
            <person name="Kraft C.L."/>
            <person name="Kravitz S."/>
            <person name="Kulp D."/>
            <person name="Lai Z."/>
            <person name="Lasko P."/>
            <person name="Lei Y."/>
            <person name="Levitsky A.A."/>
            <person name="Li J.H."/>
            <person name="Li Z."/>
            <person name="Liang Y."/>
            <person name="Lin X."/>
            <person name="Liu X."/>
            <person name="Mattei B."/>
            <person name="McIntosh T.C."/>
            <person name="McLeod M.P."/>
            <person name="McPherson D."/>
            <person name="Merkulov G."/>
            <person name="Milshina N.V."/>
            <person name="Mobarry C."/>
            <person name="Morris J."/>
            <person name="Moshrefi A."/>
            <person name="Mount S.M."/>
            <person name="Moy M."/>
            <person name="Murphy B."/>
            <person name="Murphy L."/>
            <person name="Muzny D.M."/>
            <person name="Nelson D.L."/>
            <person name="Nelson D.R."/>
            <person name="Nelson K.A."/>
            <person name="Nixon K."/>
            <person name="Nusskern D.R."/>
            <person name="Pacleb J.M."/>
            <person name="Palazzolo M."/>
            <person name="Pittman G.S."/>
            <person name="Pan S."/>
            <person name="Pollard J."/>
            <person name="Puri V."/>
            <person name="Reese M.G."/>
            <person name="Reinert K."/>
            <person name="Remington K."/>
            <person name="Saunders R.D.C."/>
            <person name="Scheeler F."/>
            <person name="Shen H."/>
            <person name="Shue B.C."/>
            <person name="Siden-Kiamos I."/>
            <person name="Simpson M."/>
            <person name="Skupski M.P."/>
            <person name="Smith T.J."/>
            <person name="Spier E."/>
            <person name="Spradling A.C."/>
            <person name="Stapleton M."/>
            <person name="Strong R."/>
            <person name="Sun E."/>
            <person name="Svirskas R."/>
            <person name="Tector C."/>
            <person name="Turner R."/>
            <person name="Venter E."/>
            <person name="Wang A.H."/>
            <person name="Wang X."/>
            <person name="Wang Z.-Y."/>
            <person name="Wassarman D.A."/>
            <person name="Weinstock G.M."/>
            <person name="Weissenbach J."/>
            <person name="Williams S.M."/>
            <person name="Woodage T."/>
            <person name="Worley K.C."/>
            <person name="Wu D."/>
            <person name="Yang S."/>
            <person name="Yao Q.A."/>
            <person name="Ye J."/>
            <person name="Yeh R.-F."/>
            <person name="Zaveri J.S."/>
            <person name="Zhan M."/>
            <person name="Zhang G."/>
            <person name="Zhao Q."/>
            <person name="Zheng L."/>
            <person name="Zheng X.H."/>
            <person name="Zhong F.N."/>
            <person name="Zhong W."/>
            <person name="Zhou X."/>
            <person name="Zhu S.C."/>
            <person name="Zhu X."/>
            <person name="Smith H.O."/>
            <person name="Gibbs R.A."/>
            <person name="Myers E.W."/>
            <person name="Rubin G.M."/>
            <person name="Venter J.C."/>
        </authorList>
    </citation>
    <scope>NUCLEOTIDE SEQUENCE [LARGE SCALE GENOMIC DNA]</scope>
    <source>
        <strain>Berkeley</strain>
    </source>
</reference>
<reference key="4">
    <citation type="journal article" date="2002" name="Genome Biol.">
        <title>Annotation of the Drosophila melanogaster euchromatic genome: a systematic review.</title>
        <authorList>
            <person name="Misra S."/>
            <person name="Crosby M.A."/>
            <person name="Mungall C.J."/>
            <person name="Matthews B.B."/>
            <person name="Campbell K.S."/>
            <person name="Hradecky P."/>
            <person name="Huang Y."/>
            <person name="Kaminker J.S."/>
            <person name="Millburn G.H."/>
            <person name="Prochnik S.E."/>
            <person name="Smith C.D."/>
            <person name="Tupy J.L."/>
            <person name="Whitfield E.J."/>
            <person name="Bayraktaroglu L."/>
            <person name="Berman B.P."/>
            <person name="Bettencourt B.R."/>
            <person name="Celniker S.E."/>
            <person name="de Grey A.D.N.J."/>
            <person name="Drysdale R.A."/>
            <person name="Harris N.L."/>
            <person name="Richter J."/>
            <person name="Russo S."/>
            <person name="Schroeder A.J."/>
            <person name="Shu S.Q."/>
            <person name="Stapleton M."/>
            <person name="Yamada C."/>
            <person name="Ashburner M."/>
            <person name="Gelbart W.M."/>
            <person name="Rubin G.M."/>
            <person name="Lewis S.E."/>
        </authorList>
    </citation>
    <scope>GENOME REANNOTATION</scope>
    <source>
        <strain>Berkeley</strain>
    </source>
</reference>
<reference key="5">
    <citation type="journal article" date="2002" name="Genome Biol.">
        <title>A Drosophila full-length cDNA resource.</title>
        <authorList>
            <person name="Stapleton M."/>
            <person name="Carlson J.W."/>
            <person name="Brokstein P."/>
            <person name="Yu C."/>
            <person name="Champe M."/>
            <person name="George R.A."/>
            <person name="Guarin H."/>
            <person name="Kronmiller B."/>
            <person name="Pacleb J.M."/>
            <person name="Park S."/>
            <person name="Wan K.H."/>
            <person name="Rubin G.M."/>
            <person name="Celniker S.E."/>
        </authorList>
    </citation>
    <scope>NUCLEOTIDE SEQUENCE [LARGE SCALE MRNA]</scope>
    <source>
        <strain>Berkeley</strain>
        <tissue>Embryo</tissue>
    </source>
</reference>
<sequence length="186" mass="20629">MANIPLLLSLADDLGRMSMVPFYEPYYCQRQRNPYLALVGPMEQQLRQLEKQVGASSGSSGAVSKIGKDGFQVCMDVSHFKPSELVVKVQDNSVLVEGNHEEREDDHGFITRHFVRRYALPPGYEADKVASTLSSDGVLTIKVPKPPAIEDKGNERIVQIQQVGPAHLNVKENPKEAVEQDNGNDK</sequence>
<evidence type="ECO:0000255" key="1">
    <source>
        <dbReference type="PROSITE-ProRule" id="PRU00285"/>
    </source>
</evidence>
<evidence type="ECO:0000256" key="2">
    <source>
        <dbReference type="SAM" id="MobiDB-lite"/>
    </source>
</evidence>
<evidence type="ECO:0000305" key="3"/>
<feature type="chain" id="PRO_0000125964" description="Heat shock protein 23">
    <location>
        <begin position="1"/>
        <end position="186"/>
    </location>
</feature>
<feature type="domain" description="sHSP" evidence="1">
    <location>
        <begin position="53"/>
        <end position="161"/>
    </location>
</feature>
<feature type="region of interest" description="Disordered" evidence="2">
    <location>
        <begin position="163"/>
        <end position="186"/>
    </location>
</feature>
<feature type="compositionally biased region" description="Basic and acidic residues" evidence="2">
    <location>
        <begin position="169"/>
        <end position="186"/>
    </location>
</feature>
<feature type="sequence conflict" description="In Ref. 2." evidence="3" ref="2">
    <original>QRN</original>
    <variation>RRI</variation>
    <location>
        <begin position="31"/>
        <end position="33"/>
    </location>
</feature>
<feature type="sequence conflict" description="In Ref. 2." evidence="3" ref="2">
    <original>K</original>
    <variation>E</variation>
    <location>
        <position position="81"/>
    </location>
</feature>
<feature type="sequence conflict" description="In Ref. 2." evidence="3" ref="2">
    <original>K</original>
    <variation>G</variation>
    <location>
        <position position="88"/>
    </location>
</feature>
<feature type="sequence conflict" description="In Ref. 2." evidence="3" ref="2">
    <original>L</original>
    <variation>V</variation>
    <location>
        <position position="95"/>
    </location>
</feature>
<feature type="sequence conflict" description="In Ref. 2." evidence="3" ref="2">
    <original>N</original>
    <variation>S</variation>
    <location>
        <position position="173"/>
    </location>
</feature>
<feature type="sequence conflict" description="In Ref. 2." evidence="3" ref="2">
    <original>N</original>
    <variation>G</variation>
    <location>
        <position position="182"/>
    </location>
</feature>
<protein>
    <recommendedName>
        <fullName>Heat shock protein 23</fullName>
    </recommendedName>
</protein>
<dbReference type="EMBL" id="J01100">
    <property type="protein sequence ID" value="AAA28637.1"/>
    <property type="molecule type" value="Genomic_DNA"/>
</dbReference>
<dbReference type="EMBL" id="V00210">
    <property type="protein sequence ID" value="CAA23494.1"/>
    <property type="molecule type" value="Genomic_DNA"/>
</dbReference>
<dbReference type="EMBL" id="X03889">
    <property type="protein sequence ID" value="CAA27525.1"/>
    <property type="molecule type" value="Genomic_DNA"/>
</dbReference>
<dbReference type="EMBL" id="AE014296">
    <property type="protein sequence ID" value="AAF50286.1"/>
    <property type="molecule type" value="Genomic_DNA"/>
</dbReference>
<dbReference type="EMBL" id="AY061081">
    <property type="protein sequence ID" value="AAL28629.1"/>
    <property type="molecule type" value="mRNA"/>
</dbReference>
<dbReference type="PIR" id="A02919">
    <property type="entry name" value="HHFF23"/>
</dbReference>
<dbReference type="PIR" id="B20647">
    <property type="entry name" value="B20647"/>
</dbReference>
<dbReference type="RefSeq" id="NP_001246694.1">
    <property type="nucleotide sequence ID" value="NM_001259765.2"/>
</dbReference>
<dbReference type="RefSeq" id="NP_523999.1">
    <property type="nucleotide sequence ID" value="NM_079275.4"/>
</dbReference>
<dbReference type="SMR" id="P02516"/>
<dbReference type="BioGRID" id="64472">
    <property type="interactions" value="71"/>
</dbReference>
<dbReference type="DIP" id="DIP-18765N"/>
<dbReference type="FunCoup" id="P02516">
    <property type="interactions" value="10"/>
</dbReference>
<dbReference type="IntAct" id="P02516">
    <property type="interactions" value="54"/>
</dbReference>
<dbReference type="STRING" id="7227.FBpp0301282"/>
<dbReference type="PaxDb" id="7227-FBpp0301282"/>
<dbReference type="DNASU" id="39077"/>
<dbReference type="EnsemblMetazoa" id="FBtr0076453">
    <property type="protein sequence ID" value="FBpp0076181"/>
    <property type="gene ID" value="FBgn0001224"/>
</dbReference>
<dbReference type="EnsemblMetazoa" id="FBtr0309504">
    <property type="protein sequence ID" value="FBpp0301282"/>
    <property type="gene ID" value="FBgn0001224"/>
</dbReference>
<dbReference type="GeneID" id="39077"/>
<dbReference type="KEGG" id="dme:Dmel_CG4463"/>
<dbReference type="AGR" id="FB:FBgn0001224"/>
<dbReference type="CTD" id="39077"/>
<dbReference type="FlyBase" id="FBgn0001224">
    <property type="gene designation" value="Hsp23"/>
</dbReference>
<dbReference type="VEuPathDB" id="VectorBase:FBgn0001224"/>
<dbReference type="eggNOG" id="KOG3591">
    <property type="taxonomic scope" value="Eukaryota"/>
</dbReference>
<dbReference type="GeneTree" id="ENSGT00940000166889"/>
<dbReference type="HOGENOM" id="CLU_095001_3_0_1"/>
<dbReference type="InParanoid" id="P02516"/>
<dbReference type="OMA" id="YYCQRRR"/>
<dbReference type="OrthoDB" id="1431247at2759"/>
<dbReference type="PhylomeDB" id="P02516"/>
<dbReference type="Reactome" id="R-DME-4420097">
    <property type="pathway name" value="VEGFA-VEGFR2 Pathway"/>
</dbReference>
<dbReference type="Reactome" id="R-DME-9009391">
    <property type="pathway name" value="Extra-nuclear estrogen signaling"/>
</dbReference>
<dbReference type="SignaLink" id="P02516"/>
<dbReference type="BioGRID-ORCS" id="39077">
    <property type="hits" value="0 hits in 3 CRISPR screens"/>
</dbReference>
<dbReference type="ChiTaRS" id="Hsp23">
    <property type="organism name" value="fly"/>
</dbReference>
<dbReference type="GenomeRNAi" id="39077"/>
<dbReference type="PRO" id="PR:P02516"/>
<dbReference type="Proteomes" id="UP000000803">
    <property type="component" value="Chromosome 3L"/>
</dbReference>
<dbReference type="Bgee" id="FBgn0001224">
    <property type="expression patterns" value="Expressed in embryonic/larval hemocyte (Drosophila) and 247 other cell types or tissues"/>
</dbReference>
<dbReference type="ExpressionAtlas" id="P02516">
    <property type="expression patterns" value="baseline and differential"/>
</dbReference>
<dbReference type="GO" id="GO:0005737">
    <property type="term" value="C:cytoplasm"/>
    <property type="evidence" value="ECO:0000318"/>
    <property type="project" value="GO_Central"/>
</dbReference>
<dbReference type="GO" id="GO:0005829">
    <property type="term" value="C:cytosol"/>
    <property type="evidence" value="ECO:0000314"/>
    <property type="project" value="FlyBase"/>
</dbReference>
<dbReference type="GO" id="GO:0005634">
    <property type="term" value="C:nucleus"/>
    <property type="evidence" value="ECO:0000318"/>
    <property type="project" value="GO_Central"/>
</dbReference>
<dbReference type="GO" id="GO:0051082">
    <property type="term" value="F:unfolded protein binding"/>
    <property type="evidence" value="ECO:0000314"/>
    <property type="project" value="FlyBase"/>
</dbReference>
<dbReference type="GO" id="GO:0061077">
    <property type="term" value="P:chaperone-mediated protein folding"/>
    <property type="evidence" value="ECO:0000314"/>
    <property type="project" value="FlyBase"/>
</dbReference>
<dbReference type="GO" id="GO:0009631">
    <property type="term" value="P:cold acclimation"/>
    <property type="evidence" value="ECO:0000270"/>
    <property type="project" value="FlyBase"/>
</dbReference>
<dbReference type="GO" id="GO:0042026">
    <property type="term" value="P:protein refolding"/>
    <property type="evidence" value="ECO:0000314"/>
    <property type="project" value="FlyBase"/>
</dbReference>
<dbReference type="GO" id="GO:0009408">
    <property type="term" value="P:response to heat"/>
    <property type="evidence" value="ECO:0000314"/>
    <property type="project" value="FlyBase"/>
</dbReference>
<dbReference type="GO" id="GO:0001666">
    <property type="term" value="P:response to hypoxia"/>
    <property type="evidence" value="ECO:0000315"/>
    <property type="project" value="FlyBase"/>
</dbReference>
<dbReference type="CDD" id="cd06526">
    <property type="entry name" value="metazoan_ACD"/>
    <property type="match status" value="1"/>
</dbReference>
<dbReference type="FunFam" id="2.60.40.790:FF:000042">
    <property type="entry name" value="heat shock protein 27"/>
    <property type="match status" value="1"/>
</dbReference>
<dbReference type="Gene3D" id="2.60.40.790">
    <property type="match status" value="1"/>
</dbReference>
<dbReference type="InterPro" id="IPR002068">
    <property type="entry name" value="A-crystallin/Hsp20_dom"/>
</dbReference>
<dbReference type="InterPro" id="IPR001436">
    <property type="entry name" value="Alpha-crystallin/sHSP_animal"/>
</dbReference>
<dbReference type="InterPro" id="IPR008978">
    <property type="entry name" value="HSP20-like_chaperone"/>
</dbReference>
<dbReference type="PANTHER" id="PTHR45640:SF13">
    <property type="entry name" value="HEAT SHOCK PROTEIN 22-RELATED"/>
    <property type="match status" value="1"/>
</dbReference>
<dbReference type="PANTHER" id="PTHR45640">
    <property type="entry name" value="HEAT SHOCK PROTEIN HSP-12.2-RELATED"/>
    <property type="match status" value="1"/>
</dbReference>
<dbReference type="Pfam" id="PF00011">
    <property type="entry name" value="HSP20"/>
    <property type="match status" value="1"/>
</dbReference>
<dbReference type="PRINTS" id="PR00299">
    <property type="entry name" value="ACRYSTALLIN"/>
</dbReference>
<dbReference type="SUPFAM" id="SSF49764">
    <property type="entry name" value="HSP20-like chaperones"/>
    <property type="match status" value="1"/>
</dbReference>
<dbReference type="PROSITE" id="PS01031">
    <property type="entry name" value="SHSP"/>
    <property type="match status" value="1"/>
</dbReference>
<organism>
    <name type="scientific">Drosophila melanogaster</name>
    <name type="common">Fruit fly</name>
    <dbReference type="NCBI Taxonomy" id="7227"/>
    <lineage>
        <taxon>Eukaryota</taxon>
        <taxon>Metazoa</taxon>
        <taxon>Ecdysozoa</taxon>
        <taxon>Arthropoda</taxon>
        <taxon>Hexapoda</taxon>
        <taxon>Insecta</taxon>
        <taxon>Pterygota</taxon>
        <taxon>Neoptera</taxon>
        <taxon>Endopterygota</taxon>
        <taxon>Diptera</taxon>
        <taxon>Brachycera</taxon>
        <taxon>Muscomorpha</taxon>
        <taxon>Ephydroidea</taxon>
        <taxon>Drosophilidae</taxon>
        <taxon>Drosophila</taxon>
        <taxon>Sophophora</taxon>
    </lineage>
</organism>
<comment type="interaction">
    <interactant intactId="EBI-110473">
        <id>P02516</id>
    </interactant>
    <interactant intactId="EBI-100746">
        <id>P02517</id>
        <label>Hsp26</label>
    </interactant>
    <organismsDiffer>false</organismsDiffer>
    <experiments>3</experiments>
</comment>
<comment type="similarity">
    <text evidence="1">Belongs to the small heat shock protein (HSP20) family.</text>
</comment>
<name>HSP23_DROME</name>